<name>YR837_MIMIV</name>
<sequence length="626" mass="72657">MDYTHLLPYEIWLNIIDFLDKDKYNLYLTNTNFFSLLDYSREYFNLIDFIIETKSMEVLKYIYQSKTNGLIRNRFVKNITLNTSLLTSCQNGNILLVKFFIEKGANHRYSEDKPLGIAAANGHSDIVEYLVNGGANIKSRNNYALRFAVKNGHYNMVKFLIEQGVDITVFDYEVFYTSCEYGHYEIFVYLMKNINDIKKLNKKRLLKKAFKGGSVKIVHYIFNDILDVYRMFYHSMTRSELKNYKLLNIIGKYGNHDILEYLHNRYQLSDTNNIAQVAALYGHFRIVKFLLDKYLHELNLNQLIISACDNGSIKMVKFLIEKGIDINTIGNSCLSHAILSGNTDLLHYLTNIGCRLTSLENFFMKNLVSFYDIETINYLRNYITFDDQHYINTIMSTSMYCGIIKLVKYFVDKSSLDYESYICGIISNGHVNIIKYLLNQNKITKQNITITINNSVILTIIQYGHIDMLKYLVSLGINICINYALDRAVSYGHLNIVEYLLELGHNINEFGDLPLRSATIANNINMVKYLVSQGANIYIIKDNPIYLASIHGHVKLVKYFIDLGSDYHKKNELPLYVAIINNNLDVVKCLVEHGCKTKTTFFDPIETAMEYYNNEIVEYLQNNEIK</sequence>
<proteinExistence type="predicted"/>
<gene>
    <name type="ordered locus">MIMI_R837</name>
</gene>
<feature type="chain" id="PRO_0000067207" description="Putative ankyrin repeat protein R837">
    <location>
        <begin position="1"/>
        <end position="626"/>
    </location>
</feature>
<feature type="repeat" description="ANK 1">
    <location>
        <begin position="42"/>
        <end position="72"/>
    </location>
</feature>
<feature type="repeat" description="ANK 2">
    <location>
        <begin position="80"/>
        <end position="109"/>
    </location>
</feature>
<feature type="repeat" description="ANK 3">
    <location>
        <begin position="110"/>
        <end position="139"/>
    </location>
</feature>
<feature type="repeat" description="ANK 4">
    <location>
        <begin position="140"/>
        <end position="169"/>
    </location>
</feature>
<feature type="repeat" description="ANK 5">
    <location>
        <begin position="171"/>
        <end position="199"/>
    </location>
</feature>
<feature type="repeat" description="ANK 6">
    <location>
        <begin position="201"/>
        <end position="230"/>
    </location>
</feature>
<feature type="repeat" description="ANK 7">
    <location>
        <begin position="242"/>
        <end position="269"/>
    </location>
</feature>
<feature type="repeat" description="ANK 8">
    <location>
        <begin position="270"/>
        <end position="298"/>
    </location>
</feature>
<feature type="repeat" description="ANK 9">
    <location>
        <begin position="299"/>
        <end position="328"/>
    </location>
</feature>
<feature type="repeat" description="ANK 10">
    <location>
        <begin position="330"/>
        <end position="358"/>
    </location>
</feature>
<feature type="repeat" description="ANK 11">
    <location>
        <begin position="393"/>
        <end position="416"/>
    </location>
</feature>
<feature type="repeat" description="ANK 12">
    <location>
        <begin position="417"/>
        <end position="446"/>
    </location>
</feature>
<feature type="repeat" description="ANK 13">
    <location>
        <begin position="452"/>
        <end position="479"/>
    </location>
</feature>
<feature type="repeat" description="ANK 14">
    <location>
        <begin position="480"/>
        <end position="509"/>
    </location>
</feature>
<feature type="repeat" description="ANK 15">
    <location>
        <begin position="510"/>
        <end position="539"/>
    </location>
</feature>
<feature type="repeat" description="ANK 16">
    <location>
        <begin position="540"/>
        <end position="569"/>
    </location>
</feature>
<feature type="repeat" description="ANK 17">
    <location>
        <begin position="570"/>
        <end position="599"/>
    </location>
</feature>
<feature type="repeat" description="ANK 18">
    <location>
        <begin position="601"/>
        <end position="626"/>
    </location>
</feature>
<organismHost>
    <name type="scientific">Acanthamoeba polyphaga</name>
    <name type="common">Amoeba</name>
    <dbReference type="NCBI Taxonomy" id="5757"/>
</organismHost>
<accession>Q5UQI8</accession>
<organism>
    <name type="scientific">Acanthamoeba polyphaga mimivirus</name>
    <name type="common">APMV</name>
    <dbReference type="NCBI Taxonomy" id="212035"/>
    <lineage>
        <taxon>Viruses</taxon>
        <taxon>Varidnaviria</taxon>
        <taxon>Bamfordvirae</taxon>
        <taxon>Nucleocytoviricota</taxon>
        <taxon>Megaviricetes</taxon>
        <taxon>Imitervirales</taxon>
        <taxon>Mimiviridae</taxon>
        <taxon>Megamimivirinae</taxon>
        <taxon>Mimivirus</taxon>
        <taxon>Mimivirus bradfordmassiliense</taxon>
    </lineage>
</organism>
<keyword id="KW-0040">ANK repeat</keyword>
<keyword id="KW-1185">Reference proteome</keyword>
<keyword id="KW-0677">Repeat</keyword>
<dbReference type="EMBL" id="AY653733">
    <property type="protein sequence ID" value="AAV51095.1"/>
    <property type="molecule type" value="Genomic_DNA"/>
</dbReference>
<dbReference type="SMR" id="Q5UQI8"/>
<dbReference type="KEGG" id="vg:9925500"/>
<dbReference type="OrthoDB" id="269at10240"/>
<dbReference type="Proteomes" id="UP000001134">
    <property type="component" value="Genome"/>
</dbReference>
<dbReference type="Gene3D" id="1.25.40.20">
    <property type="entry name" value="Ankyrin repeat-containing domain"/>
    <property type="match status" value="4"/>
</dbReference>
<dbReference type="InterPro" id="IPR002110">
    <property type="entry name" value="Ankyrin_rpt"/>
</dbReference>
<dbReference type="InterPro" id="IPR036770">
    <property type="entry name" value="Ankyrin_rpt-contain_sf"/>
</dbReference>
<dbReference type="PANTHER" id="PTHR44207:SF2">
    <property type="entry name" value="REPEAT PROTEIN, PUTATIVE-RELATED"/>
    <property type="match status" value="1"/>
</dbReference>
<dbReference type="PANTHER" id="PTHR44207">
    <property type="entry name" value="SURFACE ANTIGEN BSPA-LIKE-RELATED"/>
    <property type="match status" value="1"/>
</dbReference>
<dbReference type="Pfam" id="PF12796">
    <property type="entry name" value="Ank_2"/>
    <property type="match status" value="4"/>
</dbReference>
<dbReference type="SMART" id="SM00248">
    <property type="entry name" value="ANK"/>
    <property type="match status" value="14"/>
</dbReference>
<dbReference type="SUPFAM" id="SSF48403">
    <property type="entry name" value="Ankyrin repeat"/>
    <property type="match status" value="2"/>
</dbReference>
<dbReference type="PROSITE" id="PS50297">
    <property type="entry name" value="ANK_REP_REGION"/>
    <property type="match status" value="2"/>
</dbReference>
<dbReference type="PROSITE" id="PS50088">
    <property type="entry name" value="ANK_REPEAT"/>
    <property type="match status" value="4"/>
</dbReference>
<protein>
    <recommendedName>
        <fullName>Putative ankyrin repeat protein R837</fullName>
    </recommendedName>
</protein>
<reference key="1">
    <citation type="journal article" date="2004" name="Science">
        <title>The 1.2-megabase genome sequence of Mimivirus.</title>
        <authorList>
            <person name="Raoult D."/>
            <person name="Audic S."/>
            <person name="Robert C."/>
            <person name="Abergel C."/>
            <person name="Renesto P."/>
            <person name="Ogata H."/>
            <person name="La Scola B."/>
            <person name="Susan M."/>
            <person name="Claverie J.-M."/>
        </authorList>
    </citation>
    <scope>NUCLEOTIDE SEQUENCE [LARGE SCALE GENOMIC DNA]</scope>
    <source>
        <strain>Rowbotham-Bradford</strain>
    </source>
</reference>